<keyword id="KW-1185">Reference proteome</keyword>
<keyword id="KW-0833">Ubl conjugation pathway</keyword>
<organism>
    <name type="scientific">Arabidopsis thaliana</name>
    <name type="common">Mouse-ear cress</name>
    <dbReference type="NCBI Taxonomy" id="3702"/>
    <lineage>
        <taxon>Eukaryota</taxon>
        <taxon>Viridiplantae</taxon>
        <taxon>Streptophyta</taxon>
        <taxon>Embryophyta</taxon>
        <taxon>Tracheophyta</taxon>
        <taxon>Spermatophyta</taxon>
        <taxon>Magnoliopsida</taxon>
        <taxon>eudicotyledons</taxon>
        <taxon>Gunneridae</taxon>
        <taxon>Pentapetalae</taxon>
        <taxon>rosids</taxon>
        <taxon>malvids</taxon>
        <taxon>Brassicales</taxon>
        <taxon>Brassicaceae</taxon>
        <taxon>Camelineae</taxon>
        <taxon>Arabidopsis</taxon>
    </lineage>
</organism>
<protein>
    <recommendedName>
        <fullName>BTB/POZ domain-containing protein At2g46260</fullName>
    </recommendedName>
</protein>
<comment type="function">
    <text evidence="1">May act as a substrate-specific adapter of an E3 ubiquitin-protein ligase complex (CUL3-RBX1-BTB) which mediates the ubiquitination and subsequent proteasomal degradation of target proteins.</text>
</comment>
<comment type="pathway">
    <text>Protein modification; protein ubiquitination.</text>
</comment>
<comment type="interaction">
    <interactant intactId="EBI-15192211">
        <id>O82343</id>
    </interactant>
    <interactant intactId="EBI-15192709">
        <id>Q6NLH4</id>
        <label>BBX29</label>
    </interactant>
    <organismsDiffer>false</organismsDiffer>
    <experiments>3</experiments>
</comment>
<comment type="interaction">
    <interactant intactId="EBI-15192211">
        <id>O82343</id>
    </interactant>
    <interactant intactId="EBI-592058">
        <id>Q9FVC1</id>
        <label>SVP</label>
    </interactant>
    <organismsDiffer>false</organismsDiffer>
    <experiments>3</experiments>
</comment>
<comment type="domain">
    <text evidence="4">The BTB/POZ domain mediates the interaction with some component of ubiquitin ligase complexes.</text>
</comment>
<comment type="sequence caution" evidence="5">
    <conflict type="erroneous initiation">
        <sequence resource="EMBL-CDS" id="AAM61110"/>
    </conflict>
    <text>Truncated N-terminus.</text>
</comment>
<comment type="sequence caution" evidence="5">
    <conflict type="erroneous initiation">
        <sequence resource="EMBL-CDS" id="BAD94357"/>
    </conflict>
    <text>Truncated N-terminus.</text>
</comment>
<name>Y2626_ARATH</name>
<dbReference type="EMBL" id="AC005397">
    <property type="protein sequence ID" value="AAC62880.2"/>
    <property type="molecule type" value="Genomic_DNA"/>
</dbReference>
<dbReference type="EMBL" id="CP002685">
    <property type="protein sequence ID" value="AEC10666.1"/>
    <property type="molecule type" value="Genomic_DNA"/>
</dbReference>
<dbReference type="EMBL" id="AY046011">
    <property type="protein sequence ID" value="AAK76685.1"/>
    <property type="molecule type" value="mRNA"/>
</dbReference>
<dbReference type="EMBL" id="AY079398">
    <property type="protein sequence ID" value="AAL85129.1"/>
    <property type="molecule type" value="mRNA"/>
</dbReference>
<dbReference type="EMBL" id="AY084542">
    <property type="protein sequence ID" value="AAM61110.1"/>
    <property type="status" value="ALT_INIT"/>
    <property type="molecule type" value="mRNA"/>
</dbReference>
<dbReference type="EMBL" id="AK221929">
    <property type="protein sequence ID" value="BAD94357.1"/>
    <property type="status" value="ALT_INIT"/>
    <property type="molecule type" value="mRNA"/>
</dbReference>
<dbReference type="PIR" id="F84900">
    <property type="entry name" value="F84900"/>
</dbReference>
<dbReference type="RefSeq" id="NP_566069.1">
    <property type="nucleotide sequence ID" value="NM_130189.3"/>
</dbReference>
<dbReference type="SMR" id="O82343"/>
<dbReference type="BioGRID" id="4569">
    <property type="interactions" value="10"/>
</dbReference>
<dbReference type="FunCoup" id="O82343">
    <property type="interactions" value="1057"/>
</dbReference>
<dbReference type="IntAct" id="O82343">
    <property type="interactions" value="8"/>
</dbReference>
<dbReference type="STRING" id="3702.O82343"/>
<dbReference type="PaxDb" id="3702-AT2G46260.1"/>
<dbReference type="ProteomicsDB" id="242360"/>
<dbReference type="EnsemblPlants" id="AT2G46260.1">
    <property type="protein sequence ID" value="AT2G46260.1"/>
    <property type="gene ID" value="AT2G46260"/>
</dbReference>
<dbReference type="GeneID" id="819234"/>
<dbReference type="Gramene" id="AT2G46260.1">
    <property type="protein sequence ID" value="AT2G46260.1"/>
    <property type="gene ID" value="AT2G46260"/>
</dbReference>
<dbReference type="KEGG" id="ath:AT2G46260"/>
<dbReference type="Araport" id="AT2G46260"/>
<dbReference type="TAIR" id="AT2G46260">
    <property type="gene designation" value="LRB1"/>
</dbReference>
<dbReference type="eggNOG" id="ENOG502QT6M">
    <property type="taxonomic scope" value="Eukaryota"/>
</dbReference>
<dbReference type="HOGENOM" id="CLU_024600_2_0_1"/>
<dbReference type="InParanoid" id="O82343"/>
<dbReference type="OMA" id="RIIPMTP"/>
<dbReference type="OrthoDB" id="45365at2759"/>
<dbReference type="PhylomeDB" id="O82343"/>
<dbReference type="UniPathway" id="UPA00143"/>
<dbReference type="PRO" id="PR:O82343"/>
<dbReference type="Proteomes" id="UP000006548">
    <property type="component" value="Chromosome 2"/>
</dbReference>
<dbReference type="ExpressionAtlas" id="O82343">
    <property type="expression patterns" value="baseline and differential"/>
</dbReference>
<dbReference type="GO" id="GO:0046982">
    <property type="term" value="F:protein heterodimerization activity"/>
    <property type="evidence" value="ECO:0000353"/>
    <property type="project" value="TAIR"/>
</dbReference>
<dbReference type="GO" id="GO:0042803">
    <property type="term" value="F:protein homodimerization activity"/>
    <property type="evidence" value="ECO:0000353"/>
    <property type="project" value="TAIR"/>
</dbReference>
<dbReference type="GO" id="GO:0016567">
    <property type="term" value="P:protein ubiquitination"/>
    <property type="evidence" value="ECO:0007669"/>
    <property type="project" value="UniProtKB-UniPathway"/>
</dbReference>
<dbReference type="GO" id="GO:0010114">
    <property type="term" value="P:response to red light"/>
    <property type="evidence" value="ECO:0000316"/>
    <property type="project" value="TAIR"/>
</dbReference>
<dbReference type="CDD" id="cd18186">
    <property type="entry name" value="BTB_POZ_ZBTB_KLHL-like"/>
    <property type="match status" value="1"/>
</dbReference>
<dbReference type="FunFam" id="1.25.40.420:FF:000008">
    <property type="entry name" value="BTB/POZ domain-containing protein POB1"/>
    <property type="match status" value="1"/>
</dbReference>
<dbReference type="FunFam" id="3.30.710.10:FF:000099">
    <property type="entry name" value="BTB/POZ domain-containing protein POB1"/>
    <property type="match status" value="1"/>
</dbReference>
<dbReference type="Gene3D" id="1.25.40.420">
    <property type="match status" value="1"/>
</dbReference>
<dbReference type="Gene3D" id="2.60.210.10">
    <property type="entry name" value="Apoptosis, Tumor Necrosis Factor Receptor Associated Protein 2, Chain A"/>
    <property type="match status" value="1"/>
</dbReference>
<dbReference type="Gene3D" id="3.30.710.10">
    <property type="entry name" value="Potassium Channel Kv1.1, Chain A"/>
    <property type="match status" value="1"/>
</dbReference>
<dbReference type="InterPro" id="IPR011705">
    <property type="entry name" value="BACK"/>
</dbReference>
<dbReference type="InterPro" id="IPR000210">
    <property type="entry name" value="BTB/POZ_dom"/>
</dbReference>
<dbReference type="InterPro" id="IPR045890">
    <property type="entry name" value="POB1-like"/>
</dbReference>
<dbReference type="InterPro" id="IPR011333">
    <property type="entry name" value="SKP1/BTB/POZ_sf"/>
</dbReference>
<dbReference type="InterPro" id="IPR008974">
    <property type="entry name" value="TRAF-like"/>
</dbReference>
<dbReference type="PANTHER" id="PTHR46336:SF8">
    <property type="entry name" value="BTB DOMAIN-CONTAINING PROTEIN"/>
    <property type="match status" value="1"/>
</dbReference>
<dbReference type="PANTHER" id="PTHR46336">
    <property type="entry name" value="OS02G0260700 PROTEIN"/>
    <property type="match status" value="1"/>
</dbReference>
<dbReference type="Pfam" id="PF07707">
    <property type="entry name" value="BACK"/>
    <property type="match status" value="1"/>
</dbReference>
<dbReference type="Pfam" id="PF00651">
    <property type="entry name" value="BTB"/>
    <property type="match status" value="1"/>
</dbReference>
<dbReference type="SMART" id="SM00875">
    <property type="entry name" value="BACK"/>
    <property type="match status" value="1"/>
</dbReference>
<dbReference type="SMART" id="SM00225">
    <property type="entry name" value="BTB"/>
    <property type="match status" value="1"/>
</dbReference>
<dbReference type="SUPFAM" id="SSF54695">
    <property type="entry name" value="POZ domain"/>
    <property type="match status" value="1"/>
</dbReference>
<dbReference type="SUPFAM" id="SSF49599">
    <property type="entry name" value="TRAF domain-like"/>
    <property type="match status" value="1"/>
</dbReference>
<dbReference type="PROSITE" id="PS50097">
    <property type="entry name" value="BTB"/>
    <property type="match status" value="1"/>
</dbReference>
<sequence length="561" mass="63037">MRGSNNTDLFDPKTEMDSNFSRHGSSSEGDFGFAFNDSNFSDRLLRIEILGGPSDSRSDAEGCTSIADWARHRKRRREDNKKDNGVAISDIVACAEEQILTDNNQPDMDDAPGGDNLDDEGEAMVEEALSGDDDASSEPNWGIDCSTVVRVKELHISSPILAAKSPFFYKLFSNGMRESEQRHVTLRISAQEEGALMELLNFMYSNSLSVTTAPALLDVLMAADKFEVASCMRYCSRLLRNMPMTPDSALLYLELPSSVLMAEAVQPLTDAAKQFLASRYKDITKFHDEVMALPLAGIEAILSSDDLQIASEDAVYDFVLKWARGQYSSLEDRREILGSRLALYIRFPYMTCRKLKKVLTCSDFEHEVASKQVLEALFFKAEAPHRQRILAAEGSDSMNRRFIERAYKYRPVKVVEFELPRPQCVVYLDLKREECAGLFPSGRVYSQAFHLGGQGFFLSAHCNMDQQSSFHCFGLFLGMQEKGAVSFGVDYEFAARDKSTKEEYVSKYKGNYTFTGGKAVGYRNLFGIPWTSFIAEDSQHFINGILHLRAELTIKRSSDLH</sequence>
<gene>
    <name type="ordered locus">At2g46260</name>
    <name type="ORF">T3F17.9</name>
</gene>
<accession>O82343</accession>
<accession>Q56WV2</accession>
<accession>Q8LG00</accession>
<accession>Q94AI9</accession>
<evidence type="ECO:0000250" key="1"/>
<evidence type="ECO:0000255" key="2">
    <source>
        <dbReference type="PROSITE-ProRule" id="PRU00037"/>
    </source>
</evidence>
<evidence type="ECO:0000256" key="3">
    <source>
        <dbReference type="SAM" id="MobiDB-lite"/>
    </source>
</evidence>
<evidence type="ECO:0000269" key="4">
    <source>
    </source>
</evidence>
<evidence type="ECO:0000305" key="5"/>
<reference key="1">
    <citation type="journal article" date="1999" name="Nature">
        <title>Sequence and analysis of chromosome 2 of the plant Arabidopsis thaliana.</title>
        <authorList>
            <person name="Lin X."/>
            <person name="Kaul S."/>
            <person name="Rounsley S.D."/>
            <person name="Shea T.P."/>
            <person name="Benito M.-I."/>
            <person name="Town C.D."/>
            <person name="Fujii C.Y."/>
            <person name="Mason T.M."/>
            <person name="Bowman C.L."/>
            <person name="Barnstead M.E."/>
            <person name="Feldblyum T.V."/>
            <person name="Buell C.R."/>
            <person name="Ketchum K.A."/>
            <person name="Lee J.J."/>
            <person name="Ronning C.M."/>
            <person name="Koo H.L."/>
            <person name="Moffat K.S."/>
            <person name="Cronin L.A."/>
            <person name="Shen M."/>
            <person name="Pai G."/>
            <person name="Van Aken S."/>
            <person name="Umayam L."/>
            <person name="Tallon L.J."/>
            <person name="Gill J.E."/>
            <person name="Adams M.D."/>
            <person name="Carrera A.J."/>
            <person name="Creasy T.H."/>
            <person name="Goodman H.M."/>
            <person name="Somerville C.R."/>
            <person name="Copenhaver G.P."/>
            <person name="Preuss D."/>
            <person name="Nierman W.C."/>
            <person name="White O."/>
            <person name="Eisen J.A."/>
            <person name="Salzberg S.L."/>
            <person name="Fraser C.M."/>
            <person name="Venter J.C."/>
        </authorList>
    </citation>
    <scope>NUCLEOTIDE SEQUENCE [LARGE SCALE GENOMIC DNA]</scope>
    <source>
        <strain>cv. Columbia</strain>
    </source>
</reference>
<reference key="2">
    <citation type="journal article" date="2017" name="Plant J.">
        <title>Araport11: a complete reannotation of the Arabidopsis thaliana reference genome.</title>
        <authorList>
            <person name="Cheng C.Y."/>
            <person name="Krishnakumar V."/>
            <person name="Chan A.P."/>
            <person name="Thibaud-Nissen F."/>
            <person name="Schobel S."/>
            <person name="Town C.D."/>
        </authorList>
    </citation>
    <scope>GENOME REANNOTATION</scope>
    <source>
        <strain>cv. Columbia</strain>
    </source>
</reference>
<reference key="3">
    <citation type="journal article" date="2003" name="Science">
        <title>Empirical analysis of transcriptional activity in the Arabidopsis genome.</title>
        <authorList>
            <person name="Yamada K."/>
            <person name="Lim J."/>
            <person name="Dale J.M."/>
            <person name="Chen H."/>
            <person name="Shinn P."/>
            <person name="Palm C.J."/>
            <person name="Southwick A.M."/>
            <person name="Wu H.C."/>
            <person name="Kim C.J."/>
            <person name="Nguyen M."/>
            <person name="Pham P.K."/>
            <person name="Cheuk R.F."/>
            <person name="Karlin-Newmann G."/>
            <person name="Liu S.X."/>
            <person name="Lam B."/>
            <person name="Sakano H."/>
            <person name="Wu T."/>
            <person name="Yu G."/>
            <person name="Miranda M."/>
            <person name="Quach H.L."/>
            <person name="Tripp M."/>
            <person name="Chang C.H."/>
            <person name="Lee J.M."/>
            <person name="Toriumi M.J."/>
            <person name="Chan M.M."/>
            <person name="Tang C.C."/>
            <person name="Onodera C.S."/>
            <person name="Deng J.M."/>
            <person name="Akiyama K."/>
            <person name="Ansari Y."/>
            <person name="Arakawa T."/>
            <person name="Banh J."/>
            <person name="Banno F."/>
            <person name="Bowser L."/>
            <person name="Brooks S.Y."/>
            <person name="Carninci P."/>
            <person name="Chao Q."/>
            <person name="Choy N."/>
            <person name="Enju A."/>
            <person name="Goldsmith A.D."/>
            <person name="Gurjal M."/>
            <person name="Hansen N.F."/>
            <person name="Hayashizaki Y."/>
            <person name="Johnson-Hopson C."/>
            <person name="Hsuan V.W."/>
            <person name="Iida K."/>
            <person name="Karnes M."/>
            <person name="Khan S."/>
            <person name="Koesema E."/>
            <person name="Ishida J."/>
            <person name="Jiang P.X."/>
            <person name="Jones T."/>
            <person name="Kawai J."/>
            <person name="Kamiya A."/>
            <person name="Meyers C."/>
            <person name="Nakajima M."/>
            <person name="Narusaka M."/>
            <person name="Seki M."/>
            <person name="Sakurai T."/>
            <person name="Satou M."/>
            <person name="Tamse R."/>
            <person name="Vaysberg M."/>
            <person name="Wallender E.K."/>
            <person name="Wong C."/>
            <person name="Yamamura Y."/>
            <person name="Yuan S."/>
            <person name="Shinozaki K."/>
            <person name="Davis R.W."/>
            <person name="Theologis A."/>
            <person name="Ecker J.R."/>
        </authorList>
    </citation>
    <scope>NUCLEOTIDE SEQUENCE [LARGE SCALE MRNA]</scope>
    <source>
        <strain>cv. Columbia</strain>
    </source>
</reference>
<reference key="4">
    <citation type="submission" date="2002-03" db="EMBL/GenBank/DDBJ databases">
        <title>Full-length cDNA from Arabidopsis thaliana.</title>
        <authorList>
            <person name="Brover V.V."/>
            <person name="Troukhan M.E."/>
            <person name="Alexandrov N.A."/>
            <person name="Lu Y.-P."/>
            <person name="Flavell R.B."/>
            <person name="Feldmann K.A."/>
        </authorList>
    </citation>
    <scope>NUCLEOTIDE SEQUENCE [LARGE SCALE MRNA]</scope>
</reference>
<reference key="5">
    <citation type="submission" date="2005-03" db="EMBL/GenBank/DDBJ databases">
        <title>Large-scale analysis of RIKEN Arabidopsis full-length (RAFL) cDNAs.</title>
        <authorList>
            <person name="Totoki Y."/>
            <person name="Seki M."/>
            <person name="Ishida J."/>
            <person name="Nakajima M."/>
            <person name="Enju A."/>
            <person name="Kamiya A."/>
            <person name="Narusaka M."/>
            <person name="Shin-i T."/>
            <person name="Nakagawa M."/>
            <person name="Sakamoto N."/>
            <person name="Oishi K."/>
            <person name="Kohara Y."/>
            <person name="Kobayashi M."/>
            <person name="Toyoda A."/>
            <person name="Sakaki Y."/>
            <person name="Sakurai T."/>
            <person name="Iida K."/>
            <person name="Akiyama K."/>
            <person name="Satou M."/>
            <person name="Toyoda T."/>
            <person name="Konagaya A."/>
            <person name="Carninci P."/>
            <person name="Kawai J."/>
            <person name="Hayashizaki Y."/>
            <person name="Shinozaki K."/>
        </authorList>
    </citation>
    <scope>NUCLEOTIDE SEQUENCE [LARGE SCALE MRNA] OF 176-561</scope>
    <source>
        <strain>cv. Columbia</strain>
    </source>
</reference>
<reference key="6">
    <citation type="journal article" date="2005" name="J. Biol. Chem.">
        <title>Cullins 3a and 3b assemble with members of the broad complex/tramtrack/bric-a-brac (BTB) protein family to form essential ubiquitin-protein ligases (E3s) in Arabidopsis.</title>
        <authorList>
            <person name="Gingerich D.J."/>
            <person name="Gagne J.M."/>
            <person name="Salter D.W."/>
            <person name="Hellmann H."/>
            <person name="Estelle M."/>
            <person name="Ma L."/>
            <person name="Vierstra R.D."/>
        </authorList>
    </citation>
    <scope>DOMAIN BTB</scope>
</reference>
<feature type="chain" id="PRO_0000406780" description="BTB/POZ domain-containing protein At2g46260">
    <location>
        <begin position="1"/>
        <end position="561"/>
    </location>
</feature>
<feature type="domain" description="BTB" evidence="2">
    <location>
        <begin position="143"/>
        <end position="212"/>
    </location>
</feature>
<feature type="domain" description="BACK">
    <location>
        <begin position="266"/>
        <end position="358"/>
    </location>
</feature>
<feature type="region of interest" description="Disordered" evidence="3">
    <location>
        <begin position="1"/>
        <end position="31"/>
    </location>
</feature>
<feature type="region of interest" description="Disordered" evidence="3">
    <location>
        <begin position="100"/>
        <end position="119"/>
    </location>
</feature>
<feature type="compositionally biased region" description="Polar residues" evidence="3">
    <location>
        <begin position="17"/>
        <end position="28"/>
    </location>
</feature>
<feature type="compositionally biased region" description="Acidic residues" evidence="3">
    <location>
        <begin position="107"/>
        <end position="119"/>
    </location>
</feature>
<proteinExistence type="evidence at protein level"/>